<protein>
    <recommendedName>
        <fullName evidence="1">Pre-histone-like nucleoprotein</fullName>
    </recommendedName>
    <alternativeName>
        <fullName evidence="1">Pre-core protein VII</fullName>
        <shortName evidence="1">pVII</shortName>
    </alternativeName>
    <component>
        <recommendedName>
            <fullName evidence="1">Histone-like nucleoprotein</fullName>
            <shortName evidence="1">NP</shortName>
        </recommendedName>
        <alternativeName>
            <fullName evidence="1">Core protein VII</fullName>
        </alternativeName>
    </component>
</protein>
<keyword id="KW-0238">DNA-binding</keyword>
<keyword id="KW-1048">Host nucleus</keyword>
<keyword id="KW-0945">Host-virus interaction</keyword>
<keyword id="KW-0426">Late protein</keyword>
<keyword id="KW-0597">Phosphoprotein</keyword>
<keyword id="KW-1185">Reference proteome</keyword>
<keyword id="KW-1163">Viral penetration into host nucleus</keyword>
<keyword id="KW-0946">Virion</keyword>
<keyword id="KW-1160">Virus entry into host cell</keyword>
<dbReference type="EMBL" id="U77082">
    <property type="protein sequence ID" value="AAB38721.1"/>
    <property type="status" value="ALT_INIT"/>
    <property type="molecule type" value="Genomic_DNA"/>
</dbReference>
<dbReference type="Proteomes" id="UP000118097">
    <property type="component" value="Segment"/>
</dbReference>
<dbReference type="GO" id="GO:0043657">
    <property type="term" value="C:host cell"/>
    <property type="evidence" value="ECO:0007669"/>
    <property type="project" value="GOC"/>
</dbReference>
<dbReference type="GO" id="GO:0044196">
    <property type="term" value="C:host cell nucleolus"/>
    <property type="evidence" value="ECO:0007669"/>
    <property type="project" value="UniProtKB-SubCell"/>
</dbReference>
<dbReference type="GO" id="GO:0019028">
    <property type="term" value="C:viral capsid"/>
    <property type="evidence" value="ECO:0007669"/>
    <property type="project" value="InterPro"/>
</dbReference>
<dbReference type="GO" id="GO:0003677">
    <property type="term" value="F:DNA binding"/>
    <property type="evidence" value="ECO:0007669"/>
    <property type="project" value="UniProtKB-UniRule"/>
</dbReference>
<dbReference type="GO" id="GO:0046718">
    <property type="term" value="P:symbiont entry into host cell"/>
    <property type="evidence" value="ECO:0007669"/>
    <property type="project" value="UniProtKB-UniRule"/>
</dbReference>
<dbReference type="GO" id="GO:0075732">
    <property type="term" value="P:viral penetration into host nucleus"/>
    <property type="evidence" value="ECO:0007669"/>
    <property type="project" value="UniProtKB-UniRule"/>
</dbReference>
<dbReference type="HAMAP" id="MF_04056">
    <property type="entry name" value="ADV_PVII"/>
    <property type="match status" value="1"/>
</dbReference>
<dbReference type="InterPro" id="IPR004912">
    <property type="entry name" value="Adeno_VII"/>
</dbReference>
<dbReference type="Pfam" id="PF03228">
    <property type="entry name" value="Adeno_VII"/>
    <property type="match status" value="1"/>
</dbReference>
<gene>
    <name evidence="1" type="primary">L2</name>
</gene>
<proteinExistence type="inferred from homology"/>
<reference key="1">
    <citation type="submission" date="1996-11" db="EMBL/GenBank/DDBJ databases">
        <title>Complete DNA sequence and genomic organization of canine adenovirus type 2.</title>
        <authorList>
            <person name="Campbell J.B."/>
            <person name="Zhao Y."/>
        </authorList>
    </citation>
    <scope>NUCLEOTIDE SEQUENCE [LARGE SCALE GENOMIC DNA]</scope>
</reference>
<organismHost>
    <name type="scientific">Canis lupus familiaris</name>
    <name type="common">Dog</name>
    <name type="synonym">Canis familiaris</name>
    <dbReference type="NCBI Taxonomy" id="9615"/>
</organismHost>
<evidence type="ECO:0000255" key="1">
    <source>
        <dbReference type="HAMAP-Rule" id="MF_04056"/>
    </source>
</evidence>
<evidence type="ECO:0000256" key="2">
    <source>
        <dbReference type="SAM" id="MobiDB-lite"/>
    </source>
</evidence>
<evidence type="ECO:0000305" key="3"/>
<feature type="initiator methionine" description="Removed" evidence="1">
    <location>
        <position position="1"/>
    </location>
</feature>
<feature type="chain" id="PRO_0000439843" description="Pre-histone-like nucleoprotein" evidence="1">
    <location>
        <begin position="2"/>
        <end position="134"/>
    </location>
</feature>
<feature type="propeptide" id="PRO_0000439844" evidence="1">
    <location>
        <begin position="2"/>
        <end position="23"/>
    </location>
</feature>
<feature type="chain" id="PRO_0000036592" description="Histone-like nucleoprotein" evidence="1">
    <location>
        <begin position="24"/>
        <end position="134"/>
    </location>
</feature>
<feature type="region of interest" description="Disordered" evidence="2">
    <location>
        <begin position="40"/>
        <end position="62"/>
    </location>
</feature>
<feature type="short sequence motif" description="Nuclear localization signal" evidence="1">
    <location>
        <begin position="125"/>
        <end position="134"/>
    </location>
</feature>
<feature type="site" description="Cleavage; by viral protease" evidence="1">
    <location>
        <begin position="23"/>
        <end position="24"/>
    </location>
</feature>
<organism>
    <name type="scientific">Canine adenovirus serotype 2 (strain Toronto A 26-61)</name>
    <name type="common">CAdV-2</name>
    <name type="synonym">Canine adenovirus 2 (strain Toronto A 26-61)</name>
    <dbReference type="NCBI Taxonomy" id="69152"/>
    <lineage>
        <taxon>Viruses</taxon>
        <taxon>Varidnaviria</taxon>
        <taxon>Bamfordvirae</taxon>
        <taxon>Preplasmiviricota</taxon>
        <taxon>Tectiliviricetes</taxon>
        <taxon>Rowavirales</taxon>
        <taxon>Adenoviridae</taxon>
        <taxon>Mastadenovirus</taxon>
        <taxon>Canine mastadenovirus A</taxon>
    </lineage>
</organism>
<name>NP_ADECT</name>
<accession>P87558</accession>
<sequence length="134" mass="15085">MAILISPTNNTGWGLGTHKLFGGAKQKSDQHPVYVQAHYRASWGSKGRRRRQGRARGAPLDPKTEAEMVATIDEVARNGPPAARLVLEAARRVGAYNLRRARKLTPAGRAMMAMRARQMVKQAKKRKRRVRFRQ</sequence>
<comment type="function">
    <text evidence="1">Plays a role in the inhibition of host immune response within the nucleus. Interacts with cellular nucleosomes and immobilizes the host immune danger signal HMGB1 on chromatin. In turn, prevents HMGB1 release out of the cell and thus decreases inflammation. Also plays a role in the wrapping and condensation of the viral DNA. May also promote viral genome import into the nucleus.</text>
</comment>
<comment type="subunit">
    <text evidence="1">Interacts with the core-capsid bridging protein; this interaction bridges the virus core to the capsid. Interacts with host NPM1; this interaction might play a role in placing the pre-histone-like nucleoprotein on the viral DNA or regulating viral gene expression. Interacts with host HMGB1; this interaction inhibits host immune response.</text>
</comment>
<comment type="subcellular location">
    <molecule>Histone-like nucleoprotein</molecule>
    <subcellularLocation>
        <location evidence="1">Virion</location>
    </subcellularLocation>
    <text evidence="1">Located inside the capsid in association with the viral DNA (core). Present in about 1070 copies per virion.</text>
</comment>
<comment type="subcellular location">
    <molecule>Pre-histone-like nucleoprotein</molecule>
    <subcellularLocation>
        <location evidence="1">Host nucleus</location>
        <location evidence="1">Host nucleolus</location>
    </subcellularLocation>
</comment>
<comment type="induction">
    <text evidence="1">Expressed in the late phase of the viral replicative cycle.</text>
</comment>
<comment type="PTM">
    <text evidence="1">Cleaved near the N-terminus by the viral protease during virion maturation to form the mature protein.</text>
</comment>
<comment type="miscellaneous">
    <text evidence="1">All late proteins expressed from the major late promoter are produced by alternative splicing and alternative polyadenylation of the same gene giving rise to non-overlapping ORFs. A leader sequence is present in the N-terminus of all these mRNAs and is recognized by the viral shutoff protein to provide expression although conventional translation via ribosome scanning from the cap has been shut off in the host cell.</text>
</comment>
<comment type="similarity">
    <text evidence="1 3">Belongs to the adenoviridae histone-like nucleoprotein family.</text>
</comment>
<comment type="sequence caution" evidence="3">
    <conflict type="erroneous initiation">
        <sequence resource="EMBL-CDS" id="AAB38721"/>
    </conflict>
    <text>Extended N-terminus.</text>
</comment>
<comment type="sequence caution" evidence="3">
    <conflict type="erroneous initiation">
        <sequence resource="EMBL-CDS" id="AAB38721"/>
    </conflict>
</comment>